<evidence type="ECO:0000250" key="1">
    <source>
        <dbReference type="UniProtKB" id="P48509"/>
    </source>
</evidence>
<evidence type="ECO:0000255" key="2"/>
<evidence type="ECO:0000305" key="3"/>
<protein>
    <recommendedName>
        <fullName>CD151 antigen</fullName>
    </recommendedName>
    <alternativeName>
        <fullName>Platelet-endothelial tetraspan antigen 3</fullName>
        <shortName>PETA-3</shortName>
    </alternativeName>
    <cdAntigenName>CD151</cdAntigenName>
</protein>
<sequence length="253" mass="28355">MGEFNEKKATCGTVCLKYLLFTYNCCFWLAGLAVMAVGIWTLALKSDYISLLASSTYLATAYILVVAGVVVMVTGVLGCCATFKERRNLLRLYFILLLIIFLLEIIAGILAYVYYQQLNTELKENLKDTMIKRYHQSGHEGVTNAVDKLQQEFHCCGSNNSRDWRDSEWIRSGEADSRVVPDSCCKTVVTGCGKREHASNIYKVEGGCITKLESFIQEHLRVIGAVGIGIACVQVFGMIFTCCLYRSLKLEHY</sequence>
<keyword id="KW-1003">Cell membrane</keyword>
<keyword id="KW-0903">Direct protein sequencing</keyword>
<keyword id="KW-0325">Glycoprotein</keyword>
<keyword id="KW-0449">Lipoprotein</keyword>
<keyword id="KW-0472">Membrane</keyword>
<keyword id="KW-0564">Palmitate</keyword>
<keyword id="KW-1185">Reference proteome</keyword>
<keyword id="KW-0812">Transmembrane</keyword>
<keyword id="KW-1133">Transmembrane helix</keyword>
<keyword id="KW-0832">Ubl conjugation</keyword>
<gene>
    <name type="primary">Cd151</name>
    <name type="synonym">Peta3</name>
</gene>
<reference key="1">
    <citation type="journal article" date="2001" name="Neuropsychopharmacology">
        <title>Tetraspan protein CD151: a common target of mood stabilizing drugs?</title>
        <authorList>
            <person name="Hua L.V."/>
            <person name="Green M."/>
            <person name="Wong A."/>
            <person name="Warsh J.J."/>
            <person name="Li P.P."/>
        </authorList>
    </citation>
    <scope>NUCLEOTIDE SEQUENCE [MRNA]</scope>
    <source>
        <strain>Wistar</strain>
    </source>
</reference>
<reference key="2">
    <citation type="journal article" date="2004" name="Genome Res.">
        <title>The status, quality, and expansion of the NIH full-length cDNA project: the Mammalian Gene Collection (MGC).</title>
        <authorList>
            <consortium name="The MGC Project Team"/>
        </authorList>
    </citation>
    <scope>NUCLEOTIDE SEQUENCE [LARGE SCALE MRNA]</scope>
    <source>
        <tissue>Heart</tissue>
    </source>
</reference>
<reference key="3">
    <citation type="submission" date="2007-09" db="UniProtKB">
        <authorList>
            <person name="Lubec G."/>
            <person name="Kang S.U."/>
            <person name="Lubec S."/>
        </authorList>
    </citation>
    <scope>PROTEIN SEQUENCE OF 9-17 AND 134-148</scope>
    <scope>IDENTIFICATION BY MASS SPECTROMETRY</scope>
    <source>
        <strain>Sprague-Dawley</strain>
        <tissue>Brain</tissue>
    </source>
</reference>
<accession>Q9QZA6</accession>
<name>CD151_RAT</name>
<proteinExistence type="evidence at protein level"/>
<dbReference type="EMBL" id="AF192547">
    <property type="protein sequence ID" value="AAF05763.2"/>
    <property type="molecule type" value="mRNA"/>
</dbReference>
<dbReference type="EMBL" id="BC072515">
    <property type="protein sequence ID" value="AAH72515.1"/>
    <property type="molecule type" value="mRNA"/>
</dbReference>
<dbReference type="RefSeq" id="NP_071968.1">
    <property type="nucleotide sequence ID" value="NM_022523.1"/>
</dbReference>
<dbReference type="RefSeq" id="XP_003749065.1">
    <property type="nucleotide sequence ID" value="XM_003749017.4"/>
</dbReference>
<dbReference type="RefSeq" id="XP_006230638.1">
    <property type="nucleotide sequence ID" value="XM_006230576.5"/>
</dbReference>
<dbReference type="RefSeq" id="XP_006230660.1">
    <property type="nucleotide sequence ID" value="XM_006230598.3"/>
</dbReference>
<dbReference type="RefSeq" id="XP_017445147.1">
    <property type="nucleotide sequence ID" value="XM_017589658.3"/>
</dbReference>
<dbReference type="RefSeq" id="XP_017445148.1">
    <property type="nucleotide sequence ID" value="XM_017589659.1"/>
</dbReference>
<dbReference type="RefSeq" id="XP_017445742.1">
    <property type="nucleotide sequence ID" value="XM_017590253.1"/>
</dbReference>
<dbReference type="RefSeq" id="XP_017445743.1">
    <property type="nucleotide sequence ID" value="XM_017590254.1"/>
</dbReference>
<dbReference type="RefSeq" id="XP_017459719.1">
    <property type="nucleotide sequence ID" value="XM_017604230.1"/>
</dbReference>
<dbReference type="RefSeq" id="XP_017459724.1">
    <property type="nucleotide sequence ID" value="XM_017604235.1"/>
</dbReference>
<dbReference type="RefSeq" id="XP_017459725.1">
    <property type="nucleotide sequence ID" value="XM_017604236.1"/>
</dbReference>
<dbReference type="RefSeq" id="XP_017459726.1">
    <property type="nucleotide sequence ID" value="XM_017604237.1"/>
</dbReference>
<dbReference type="SMR" id="Q9QZA6"/>
<dbReference type="FunCoup" id="Q9QZA6">
    <property type="interactions" value="437"/>
</dbReference>
<dbReference type="STRING" id="10116.ENSRNOP00000066223"/>
<dbReference type="GlyCosmos" id="Q9QZA6">
    <property type="glycosylation" value="1 site, 3 glycans"/>
</dbReference>
<dbReference type="GlyGen" id="Q9QZA6">
    <property type="glycosylation" value="1 site, 3 N-linked glycans (1 site)"/>
</dbReference>
<dbReference type="iPTMnet" id="Q9QZA6"/>
<dbReference type="PhosphoSitePlus" id="Q9QZA6"/>
<dbReference type="SwissPalm" id="Q9QZA6"/>
<dbReference type="jPOST" id="Q9QZA6"/>
<dbReference type="PaxDb" id="10116-ENSRNOP00000026080"/>
<dbReference type="Ensembl" id="ENSRNOT00000089241.2">
    <property type="protein sequence ID" value="ENSRNOP00000073673.1"/>
    <property type="gene ID" value="ENSRNOG00000062573.1"/>
</dbReference>
<dbReference type="GeneID" id="64315"/>
<dbReference type="KEGG" id="rno:64315"/>
<dbReference type="UCSC" id="RGD:621290">
    <property type="organism name" value="rat"/>
</dbReference>
<dbReference type="AGR" id="RGD:621290"/>
<dbReference type="CTD" id="977"/>
<dbReference type="RGD" id="621290">
    <property type="gene designation" value="Cd151"/>
</dbReference>
<dbReference type="eggNOG" id="KOG3882">
    <property type="taxonomic scope" value="Eukaryota"/>
</dbReference>
<dbReference type="GeneTree" id="ENSGT00940000157760"/>
<dbReference type="HOGENOM" id="CLU_055524_5_0_1"/>
<dbReference type="InParanoid" id="Q9QZA6"/>
<dbReference type="OMA" id="DSCCKTR"/>
<dbReference type="OrthoDB" id="438211at2759"/>
<dbReference type="PhylomeDB" id="Q9QZA6"/>
<dbReference type="TreeFam" id="TF352892"/>
<dbReference type="Reactome" id="R-RNO-446107">
    <property type="pathway name" value="Type I hemidesmosome assembly"/>
</dbReference>
<dbReference type="PRO" id="PR:Q9QZA6"/>
<dbReference type="Proteomes" id="UP000002494">
    <property type="component" value="Chromosome 1"/>
</dbReference>
<dbReference type="Bgee" id="ENSRNOG00000019215">
    <property type="expression patterns" value="Expressed in ovary and 19 other cell types or tissues"/>
</dbReference>
<dbReference type="GO" id="GO:0005604">
    <property type="term" value="C:basement membrane"/>
    <property type="evidence" value="ECO:0000266"/>
    <property type="project" value="RGD"/>
</dbReference>
<dbReference type="GO" id="GO:0009986">
    <property type="term" value="C:cell surface"/>
    <property type="evidence" value="ECO:0000266"/>
    <property type="project" value="RGD"/>
</dbReference>
<dbReference type="GO" id="GO:0005886">
    <property type="term" value="C:plasma membrane"/>
    <property type="evidence" value="ECO:0000318"/>
    <property type="project" value="GO_Central"/>
</dbReference>
<dbReference type="GO" id="GO:0005178">
    <property type="term" value="F:integrin binding"/>
    <property type="evidence" value="ECO:0000353"/>
    <property type="project" value="RGD"/>
</dbReference>
<dbReference type="GO" id="GO:0016477">
    <property type="term" value="P:cell migration"/>
    <property type="evidence" value="ECO:0000266"/>
    <property type="project" value="RGD"/>
</dbReference>
<dbReference type="GO" id="GO:0030335">
    <property type="term" value="P:positive regulation of cell migration"/>
    <property type="evidence" value="ECO:0000266"/>
    <property type="project" value="RGD"/>
</dbReference>
<dbReference type="GO" id="GO:0045807">
    <property type="term" value="P:positive regulation of endocytosis"/>
    <property type="evidence" value="ECO:0000266"/>
    <property type="project" value="RGD"/>
</dbReference>
<dbReference type="GO" id="GO:0042098">
    <property type="term" value="P:T cell proliferation"/>
    <property type="evidence" value="ECO:0000266"/>
    <property type="project" value="RGD"/>
</dbReference>
<dbReference type="GO" id="GO:0044319">
    <property type="term" value="P:wound healing, spreading of cells"/>
    <property type="evidence" value="ECO:0000266"/>
    <property type="project" value="RGD"/>
</dbReference>
<dbReference type="CDD" id="cd03155">
    <property type="entry name" value="CD151_like_LEL"/>
    <property type="match status" value="1"/>
</dbReference>
<dbReference type="FunFam" id="1.10.1450.10:FF:000005">
    <property type="entry name" value="Tetraspanin"/>
    <property type="match status" value="1"/>
</dbReference>
<dbReference type="Gene3D" id="1.10.1450.10">
    <property type="entry name" value="Tetraspanin"/>
    <property type="match status" value="1"/>
</dbReference>
<dbReference type="InterPro" id="IPR018499">
    <property type="entry name" value="Tetraspanin/Peripherin"/>
</dbReference>
<dbReference type="InterPro" id="IPR000301">
    <property type="entry name" value="Tetraspanin_animals"/>
</dbReference>
<dbReference type="InterPro" id="IPR018503">
    <property type="entry name" value="Tetraspanin_CS"/>
</dbReference>
<dbReference type="InterPro" id="IPR008952">
    <property type="entry name" value="Tetraspanin_EC2_sf"/>
</dbReference>
<dbReference type="PANTHER" id="PTHR19282:SF487">
    <property type="entry name" value="CD151 ANTIGEN"/>
    <property type="match status" value="1"/>
</dbReference>
<dbReference type="PANTHER" id="PTHR19282">
    <property type="entry name" value="TETRASPANIN"/>
    <property type="match status" value="1"/>
</dbReference>
<dbReference type="Pfam" id="PF00335">
    <property type="entry name" value="Tetraspanin"/>
    <property type="match status" value="1"/>
</dbReference>
<dbReference type="PIRSF" id="PIRSF002419">
    <property type="entry name" value="Tetraspanin"/>
    <property type="match status" value="1"/>
</dbReference>
<dbReference type="PRINTS" id="PR00259">
    <property type="entry name" value="TMFOUR"/>
</dbReference>
<dbReference type="SUPFAM" id="SSF48652">
    <property type="entry name" value="Tetraspanin"/>
    <property type="match status" value="1"/>
</dbReference>
<dbReference type="PROSITE" id="PS00421">
    <property type="entry name" value="TM4_1"/>
    <property type="match status" value="1"/>
</dbReference>
<comment type="function">
    <text evidence="1">Structural component of specialized membrane microdomains known as tetraspanin-enriched microdomains (TERMs), which act as platforms for receptor clustering and signaling. Plays a role in various cellular and molecular mechanism through its association with both integrin and non-integrin proteins. These interactions facilitate critical cellular functions, including cell-to-cell communication, wound healing, platelet aggregation, trafficking, cell motility, and angiogenesis. Via interaction with JAM-A/F11R and integrin ITGA3:ITGB1, promotes the recruitment of signaling molecules such as RAC1, CDC42 and RhoGTPases to facilitate the polarization of epithelial cells and the reorganization of the actin cytoskeleton, which are critical steps in cell migration process. Regulates the glycosylation pattern of ITGA3:ITGB1 thereby modulating its activity. Plays an essential role in the maintenance of central laminin-binding integrin ITGA6:ITGB4-containing adhesion complexes. Essential for the proper assembly of the glomerular and tubular basement membranes in kidney. Contributes to T-cell activation by modulating integrin signaling leading to activation of downstream targets PTK2 and MAPK1/MAPK3.</text>
</comment>
<comment type="subunit">
    <text evidence="1">Interacts with integrins ITGA3:ITGB1, ITGA5:ITGB1, ITGA3:ITGB1 and ITGA6:ITGB4 and with CD9 and CD181. Interacts (via the second extracellular domain) with integrin ITGAV:ITGB3. Interacts with ITGA3; this interaction modulates ITGA3 glycosylation pattern. Interacts with F11R. Interacts with RAC1 and CDC42; these interactions mediate physical association of RAC1 and CDC42 with integrin adhesion receptor complexes.</text>
</comment>
<comment type="subcellular location">
    <subcellularLocation>
        <location evidence="1">Cell membrane</location>
        <topology evidence="1">Multi-pass membrane protein</topology>
    </subcellularLocation>
    <text evidence="1">Relocalizes to the immune synapse in T-cells upon activation.</text>
</comment>
<comment type="PTM">
    <text evidence="1">Palmitoylated. Palmitoylation by ZDHHC2 regulates CD151 expression, association with other tetraspanin family proteins and function in cell adhesion.</text>
</comment>
<comment type="PTM">
    <text evidence="1">Ubiquitinated by RNF128 on lysine residues present in the tetraspanin amino terminus via 'Lys-48'-linked ubiquitin leading to proteasomal degradation.</text>
</comment>
<comment type="similarity">
    <text evidence="3">Belongs to the tetraspanin (TM4SF) family.</text>
</comment>
<organism>
    <name type="scientific">Rattus norvegicus</name>
    <name type="common">Rat</name>
    <dbReference type="NCBI Taxonomy" id="10116"/>
    <lineage>
        <taxon>Eukaryota</taxon>
        <taxon>Metazoa</taxon>
        <taxon>Chordata</taxon>
        <taxon>Craniata</taxon>
        <taxon>Vertebrata</taxon>
        <taxon>Euteleostomi</taxon>
        <taxon>Mammalia</taxon>
        <taxon>Eutheria</taxon>
        <taxon>Euarchontoglires</taxon>
        <taxon>Glires</taxon>
        <taxon>Rodentia</taxon>
        <taxon>Myomorpha</taxon>
        <taxon>Muroidea</taxon>
        <taxon>Muridae</taxon>
        <taxon>Murinae</taxon>
        <taxon>Rattus</taxon>
    </lineage>
</organism>
<feature type="chain" id="PRO_0000219233" description="CD151 antigen">
    <location>
        <begin position="1"/>
        <end position="253"/>
    </location>
</feature>
<feature type="topological domain" description="Cytoplasmic" evidence="2">
    <location>
        <begin position="1"/>
        <end position="18"/>
    </location>
</feature>
<feature type="transmembrane region" description="Helical" evidence="2">
    <location>
        <begin position="19"/>
        <end position="39"/>
    </location>
</feature>
<feature type="topological domain" description="Extracellular" evidence="2">
    <location>
        <begin position="40"/>
        <end position="57"/>
    </location>
</feature>
<feature type="transmembrane region" description="Helical" evidence="2">
    <location>
        <begin position="58"/>
        <end position="78"/>
    </location>
</feature>
<feature type="topological domain" description="Cytoplasmic" evidence="2">
    <location>
        <begin position="79"/>
        <end position="91"/>
    </location>
</feature>
<feature type="transmembrane region" description="Helical" evidence="2">
    <location>
        <begin position="92"/>
        <end position="112"/>
    </location>
</feature>
<feature type="topological domain" description="Extracellular" evidence="2">
    <location>
        <begin position="113"/>
        <end position="221"/>
    </location>
</feature>
<feature type="transmembrane region" description="Helical" evidence="2">
    <location>
        <begin position="222"/>
        <end position="242"/>
    </location>
</feature>
<feature type="topological domain" description="Cytoplasmic" evidence="2">
    <location>
        <begin position="243"/>
        <end position="253"/>
    </location>
</feature>
<feature type="lipid moiety-binding region" description="S-palmitoyl cysteine" evidence="1">
    <location>
        <position position="11"/>
    </location>
</feature>
<feature type="lipid moiety-binding region" description="S-palmitoyl cysteine" evidence="1">
    <location>
        <position position="15"/>
    </location>
</feature>
<feature type="lipid moiety-binding region" description="S-palmitoyl cysteine" evidence="1">
    <location>
        <position position="242"/>
    </location>
</feature>
<feature type="lipid moiety-binding region" description="S-palmitoyl cysteine" evidence="1">
    <location>
        <position position="243"/>
    </location>
</feature>
<feature type="glycosylation site" description="N-linked (GlcNAc...) asparagine" evidence="2">
    <location>
        <position position="159"/>
    </location>
</feature>